<feature type="chain" id="PRO_0000148744" description="Voltage-gated potassium channel subunit beta-1">
    <location>
        <begin position="1"/>
        <end position="401"/>
    </location>
</feature>
<feature type="active site" description="Proton donor/acceptor" evidence="1">
    <location>
        <position position="124"/>
    </location>
</feature>
<feature type="binding site" evidence="1">
    <location>
        <position position="90"/>
    </location>
    <ligand>
        <name>NADP(+)</name>
        <dbReference type="ChEBI" id="CHEBI:58349"/>
    </ligand>
</feature>
<feature type="binding site" evidence="1">
    <location>
        <position position="91"/>
    </location>
    <ligand>
        <name>NADP(+)</name>
        <dbReference type="ChEBI" id="CHEBI:58349"/>
    </ligand>
</feature>
<feature type="binding site" evidence="1">
    <location>
        <position position="97"/>
    </location>
    <ligand>
        <name>NADP(+)</name>
        <dbReference type="ChEBI" id="CHEBI:58349"/>
    </ligand>
</feature>
<feature type="binding site" evidence="1">
    <location>
        <position position="119"/>
    </location>
    <ligand>
        <name>NADP(+)</name>
        <dbReference type="ChEBI" id="CHEBI:58349"/>
    </ligand>
</feature>
<feature type="binding site" evidence="1">
    <location>
        <position position="192"/>
    </location>
    <ligand>
        <name>NADP(+)</name>
        <dbReference type="ChEBI" id="CHEBI:58349"/>
    </ligand>
</feature>
<feature type="binding site" evidence="1">
    <location>
        <position position="222"/>
    </location>
    <ligand>
        <name>NADP(+)</name>
        <dbReference type="ChEBI" id="CHEBI:58349"/>
    </ligand>
</feature>
<feature type="binding site" evidence="1">
    <location>
        <position position="223"/>
    </location>
    <ligand>
        <name>NADP(+)</name>
        <dbReference type="ChEBI" id="CHEBI:58349"/>
    </ligand>
</feature>
<feature type="binding site" evidence="1">
    <location>
        <position position="248"/>
    </location>
    <ligand>
        <name>NADP(+)</name>
        <dbReference type="ChEBI" id="CHEBI:58349"/>
    </ligand>
</feature>
<feature type="binding site" evidence="1">
    <location>
        <position position="277"/>
    </location>
    <ligand>
        <name>NADP(+)</name>
        <dbReference type="ChEBI" id="CHEBI:58349"/>
    </ligand>
</feature>
<feature type="binding site" evidence="1">
    <location>
        <position position="278"/>
    </location>
    <ligand>
        <name>NADP(+)</name>
        <dbReference type="ChEBI" id="CHEBI:58349"/>
    </ligand>
</feature>
<feature type="binding site" evidence="1">
    <location>
        <position position="279"/>
    </location>
    <ligand>
        <name>NADP(+)</name>
        <dbReference type="ChEBI" id="CHEBI:58349"/>
    </ligand>
</feature>
<feature type="binding site" evidence="1">
    <location>
        <position position="280"/>
    </location>
    <ligand>
        <name>NADP(+)</name>
        <dbReference type="ChEBI" id="CHEBI:58349"/>
    </ligand>
</feature>
<feature type="binding site" evidence="1">
    <location>
        <position position="281"/>
    </location>
    <ligand>
        <name>NADP(+)</name>
        <dbReference type="ChEBI" id="CHEBI:58349"/>
    </ligand>
</feature>
<feature type="binding site" evidence="1">
    <location>
        <position position="282"/>
    </location>
    <ligand>
        <name>NADP(+)</name>
        <dbReference type="ChEBI" id="CHEBI:58349"/>
    </ligand>
</feature>
<feature type="binding site" evidence="1">
    <location>
        <position position="288"/>
    </location>
    <ligand>
        <name>NADP(+)</name>
        <dbReference type="ChEBI" id="CHEBI:58349"/>
    </ligand>
</feature>
<feature type="binding site" evidence="1">
    <location>
        <position position="298"/>
    </location>
    <ligand>
        <name>NADP(+)</name>
        <dbReference type="ChEBI" id="CHEBI:58349"/>
    </ligand>
</feature>
<feature type="binding site" evidence="1">
    <location>
        <position position="357"/>
    </location>
    <ligand>
        <name>NADP(+)</name>
        <dbReference type="ChEBI" id="CHEBI:58349"/>
    </ligand>
</feature>
<feature type="binding site" evidence="1">
    <location>
        <position position="359"/>
    </location>
    <ligand>
        <name>NADP(+)</name>
        <dbReference type="ChEBI" id="CHEBI:58349"/>
    </ligand>
</feature>
<feature type="binding site" evidence="1">
    <location>
        <position position="363"/>
    </location>
    <ligand>
        <name>NADP(+)</name>
        <dbReference type="ChEBI" id="CHEBI:58349"/>
    </ligand>
</feature>
<feature type="binding site" evidence="1">
    <location>
        <position position="366"/>
    </location>
    <ligand>
        <name>NADP(+)</name>
        <dbReference type="ChEBI" id="CHEBI:58349"/>
    </ligand>
</feature>
<feature type="binding site" evidence="1">
    <location>
        <position position="367"/>
    </location>
    <ligand>
        <name>NADP(+)</name>
        <dbReference type="ChEBI" id="CHEBI:58349"/>
    </ligand>
</feature>
<name>KCAB1_CHICK</name>
<gene>
    <name type="primary">KCNAB1</name>
    <name type="synonym">KVB1.1</name>
</gene>
<organism>
    <name type="scientific">Gallus gallus</name>
    <name type="common">Chicken</name>
    <dbReference type="NCBI Taxonomy" id="9031"/>
    <lineage>
        <taxon>Eukaryota</taxon>
        <taxon>Metazoa</taxon>
        <taxon>Chordata</taxon>
        <taxon>Craniata</taxon>
        <taxon>Vertebrata</taxon>
        <taxon>Euteleostomi</taxon>
        <taxon>Archelosauria</taxon>
        <taxon>Archosauria</taxon>
        <taxon>Dinosauria</taxon>
        <taxon>Saurischia</taxon>
        <taxon>Theropoda</taxon>
        <taxon>Coelurosauria</taxon>
        <taxon>Aves</taxon>
        <taxon>Neognathae</taxon>
        <taxon>Galloanserae</taxon>
        <taxon>Galliformes</taxon>
        <taxon>Phasianidae</taxon>
        <taxon>Phasianinae</taxon>
        <taxon>Gallus</taxon>
    </lineage>
</organism>
<reference key="1">
    <citation type="journal article" date="1999" name="Brain Res. Mol. Brain Res.">
        <title>Cloning and expression of Shaker alpha- and beta-subunits during inner ear development.</title>
        <authorList>
            <person name="Rajeevan M.S."/>
            <person name="Hu S."/>
            <person name="Sakai Y."/>
            <person name="Sokolowski B.H.A."/>
        </authorList>
    </citation>
    <scope>NUCLEOTIDE SEQUENCE [MRNA]</scope>
    <source>
        <tissue>Cochlea</tissue>
    </source>
</reference>
<proteinExistence type="evidence at transcript level"/>
<accession>Q9PWR1</accession>
<comment type="function">
    <text evidence="2 3">Regulatory subunit of the voltage-gated potassium (Kv) channels composed of pore-forming and potassium-conducting alpha subunits and of regulatory beta subunits. The beta-1/KCNAB1 cytoplasmic subunit mediates closure of delayed rectifier potassium channels by physically obstructing the pore via its N-terminal domain and increases the speed of channel closure for other family members. Promotes the inactivation of KCNA1, KCNA2, KCNA4, KCNA5 and KCNA6 alpha subunit-containing channels (By similarity). Displays nicotinamide adenine dinucleotide phosphate (NADPH)-dependent aldoketoreductase activity by catalyzing the NADPH-dependent reduction of a variety of endogenous aldehydes and ketones (By similarity). The binding of NADPH is required for efficient down-regulation of potassium channel activity (By similarity). Oxidation of the bound NADPH restrains N-terminal domain from blocking the channel, thereby decreasing N-type inactivation of potassium channel activity (By similarity).</text>
</comment>
<comment type="catalytic activity">
    <reaction evidence="2">
        <text>a primary alcohol + NADP(+) = an aldehyde + NADPH + H(+)</text>
        <dbReference type="Rhea" id="RHEA:15937"/>
        <dbReference type="ChEBI" id="CHEBI:15378"/>
        <dbReference type="ChEBI" id="CHEBI:15734"/>
        <dbReference type="ChEBI" id="CHEBI:17478"/>
        <dbReference type="ChEBI" id="CHEBI:57783"/>
        <dbReference type="ChEBI" id="CHEBI:58349"/>
    </reaction>
    <physiologicalReaction direction="right-to-left" evidence="2">
        <dbReference type="Rhea" id="RHEA:15939"/>
    </physiologicalReaction>
</comment>
<comment type="catalytic activity">
    <reaction evidence="2">
        <text>a secondary alcohol + NADP(+) = a ketone + NADPH + H(+)</text>
        <dbReference type="Rhea" id="RHEA:19257"/>
        <dbReference type="ChEBI" id="CHEBI:15378"/>
        <dbReference type="ChEBI" id="CHEBI:17087"/>
        <dbReference type="ChEBI" id="CHEBI:35681"/>
        <dbReference type="ChEBI" id="CHEBI:57783"/>
        <dbReference type="ChEBI" id="CHEBI:58349"/>
    </reaction>
    <physiologicalReaction direction="right-to-left" evidence="2">
        <dbReference type="Rhea" id="RHEA:19259"/>
    </physiologicalReaction>
</comment>
<comment type="subunit">
    <text evidence="2 4">Homotetramer (By similarity). Interaction with tetrameric potassium channel alpha subunits gives rise to a heterooctamer (Probable).</text>
</comment>
<comment type="subcellular location">
    <subcellularLocation>
        <location evidence="3">Cytoplasm</location>
    </subcellularLocation>
    <subcellularLocation>
        <location evidence="2">Membrane</location>
        <topology evidence="2">Peripheral membrane protein</topology>
        <orientation evidence="2">Cytoplasmic side</orientation>
    </subcellularLocation>
    <subcellularLocation>
        <location evidence="3">Cell membrane</location>
        <topology evidence="3">Peripheral membrane protein</topology>
        <orientation evidence="3">Cytoplasmic side</orientation>
    </subcellularLocation>
    <text evidence="3">Recruited to the cytoplasmic side of the cell membrane via its interaction with pore-forming potassium channel alpha subunits.</text>
</comment>
<comment type="developmental stage">
    <text>In the inner ear, expression detected in the otocyst at embryonic day 3 and in the whole cochlea at E 6. Expressed throughout embryonic development and adulthood.</text>
</comment>
<comment type="domain">
    <text evidence="2">The N-terminal domain of the beta subunit mediates closure of delayed rectifier potassium channels by physically obstructing the pore.</text>
</comment>
<comment type="similarity">
    <text evidence="4">Belongs to the shaker potassium channel beta subunit family.</text>
</comment>
<protein>
    <recommendedName>
        <fullName>Voltage-gated potassium channel subunit beta-1</fullName>
        <ecNumber evidence="2">1.1.1.-</ecNumber>
    </recommendedName>
    <alternativeName>
        <fullName>K(+) channel subunit beta-1</fullName>
    </alternativeName>
    <alternativeName>
        <fullName>Kv-beta-1</fullName>
    </alternativeName>
</protein>
<evidence type="ECO:0000250" key="1">
    <source>
        <dbReference type="UniProtKB" id="P62483"/>
    </source>
</evidence>
<evidence type="ECO:0000250" key="2">
    <source>
        <dbReference type="UniProtKB" id="P63144"/>
    </source>
</evidence>
<evidence type="ECO:0000250" key="3">
    <source>
        <dbReference type="UniProtKB" id="Q14722"/>
    </source>
</evidence>
<evidence type="ECO:0000305" key="4"/>
<sequence>MQVSIACTEHNLKSRNGEERLISKQNAAAPNVVNAARAKFRTVAIIARSLGTFTPQHHISLKESTAKQTGMKYRNLGKSGLRVSCLGLGTWVTFGGQISDEVAEQLMTIAYESGVNLFDTAEVYAAGKAEVILGNILKKKGWRRSSLVITTKLYWGGKAETERGLSRKHIIEGLRASLQRLQLEYVDVVFANRPDNNTPMEEIVRAMTHVINQGMAMYWGTSRWSAMEIMEAYSVARQFNLIPPVCEQAEYHLFQREKVEVQLPELYHKIGVGAMTWSPLACGIISGKYGNGVPESSRAALKCYQWLKEKIISEEGRKQQTKLKDLSPIAERLGCTLPQLAVAWCLRNEGVSSVLLGSSNPEQLIENLGAIQVLPKMTSHIVNEIDNILGNKPYSKKDYRS</sequence>
<keyword id="KW-1003">Cell membrane</keyword>
<keyword id="KW-0963">Cytoplasm</keyword>
<keyword id="KW-0406">Ion transport</keyword>
<keyword id="KW-0472">Membrane</keyword>
<keyword id="KW-0521">NADP</keyword>
<keyword id="KW-0560">Oxidoreductase</keyword>
<keyword id="KW-0630">Potassium</keyword>
<keyword id="KW-0633">Potassium transport</keyword>
<keyword id="KW-1185">Reference proteome</keyword>
<keyword id="KW-0813">Transport</keyword>
<dbReference type="EC" id="1.1.1.-" evidence="2"/>
<dbReference type="EMBL" id="U87787">
    <property type="protein sequence ID" value="AAD10624.1"/>
    <property type="molecule type" value="mRNA"/>
</dbReference>
<dbReference type="RefSeq" id="NP_990237.1">
    <property type="nucleotide sequence ID" value="NM_204906.1"/>
</dbReference>
<dbReference type="SMR" id="Q9PWR1"/>
<dbReference type="FunCoup" id="Q9PWR1">
    <property type="interactions" value="211"/>
</dbReference>
<dbReference type="STRING" id="9031.ENSGALP00000059084"/>
<dbReference type="PaxDb" id="9031-ENSGALP00000032335"/>
<dbReference type="Ensembl" id="ENSGALT00010003522.1">
    <property type="protein sequence ID" value="ENSGALP00010001964.1"/>
    <property type="gene ID" value="ENSGALG00010001520.1"/>
</dbReference>
<dbReference type="GeneID" id="395730"/>
<dbReference type="KEGG" id="gga:395730"/>
<dbReference type="CTD" id="7881"/>
<dbReference type="VEuPathDB" id="HostDB:geneid_395730"/>
<dbReference type="eggNOG" id="KOG1575">
    <property type="taxonomic scope" value="Eukaryota"/>
</dbReference>
<dbReference type="GeneTree" id="ENSGT00940000156760"/>
<dbReference type="HOGENOM" id="CLU_023205_2_0_1"/>
<dbReference type="InParanoid" id="Q9PWR1"/>
<dbReference type="OMA" id="MWAGPYG"/>
<dbReference type="OrthoDB" id="1720422at2759"/>
<dbReference type="PhylomeDB" id="Q9PWR1"/>
<dbReference type="Reactome" id="R-GGA-1296072">
    <property type="pathway name" value="Voltage gated Potassium channels"/>
</dbReference>
<dbReference type="PRO" id="PR:Q9PWR1"/>
<dbReference type="Proteomes" id="UP000000539">
    <property type="component" value="Chromosome 9"/>
</dbReference>
<dbReference type="Bgee" id="ENSGALG00000010269">
    <property type="expression patterns" value="Expressed in brain and 7 other cell types or tissues"/>
</dbReference>
<dbReference type="GO" id="GO:0009898">
    <property type="term" value="C:cytoplasmic side of plasma membrane"/>
    <property type="evidence" value="ECO:0000250"/>
    <property type="project" value="UniProtKB"/>
</dbReference>
<dbReference type="GO" id="GO:0005829">
    <property type="term" value="C:cytosol"/>
    <property type="evidence" value="ECO:0000250"/>
    <property type="project" value="UniProtKB"/>
</dbReference>
<dbReference type="GO" id="GO:0044224">
    <property type="term" value="C:juxtaparanode region of axon"/>
    <property type="evidence" value="ECO:0000318"/>
    <property type="project" value="GO_Central"/>
</dbReference>
<dbReference type="GO" id="GO:0034705">
    <property type="term" value="C:potassium channel complex"/>
    <property type="evidence" value="ECO:0000250"/>
    <property type="project" value="UniProtKB"/>
</dbReference>
<dbReference type="GO" id="GO:0008076">
    <property type="term" value="C:voltage-gated potassium channel complex"/>
    <property type="evidence" value="ECO:0000318"/>
    <property type="project" value="GO_Central"/>
</dbReference>
<dbReference type="GO" id="GO:0004033">
    <property type="term" value="F:aldo-keto reductase (NADPH) activity"/>
    <property type="evidence" value="ECO:0000318"/>
    <property type="project" value="GO_Central"/>
</dbReference>
<dbReference type="GO" id="GO:0004090">
    <property type="term" value="F:carbonyl reductase (NADPH) activity"/>
    <property type="evidence" value="ECO:0007669"/>
    <property type="project" value="RHEA"/>
</dbReference>
<dbReference type="GO" id="GO:0070402">
    <property type="term" value="F:NADPH binding"/>
    <property type="evidence" value="ECO:0000250"/>
    <property type="project" value="UniProtKB"/>
</dbReference>
<dbReference type="GO" id="GO:0015459">
    <property type="term" value="F:potassium channel regulator activity"/>
    <property type="evidence" value="ECO:0000250"/>
    <property type="project" value="UniProtKB"/>
</dbReference>
<dbReference type="GO" id="GO:0044325">
    <property type="term" value="F:transmembrane transporter binding"/>
    <property type="evidence" value="ECO:0000318"/>
    <property type="project" value="GO_Central"/>
</dbReference>
<dbReference type="GO" id="GO:0005249">
    <property type="term" value="F:voltage-gated potassium channel activity"/>
    <property type="evidence" value="ECO:0007669"/>
    <property type="project" value="InterPro"/>
</dbReference>
<dbReference type="GO" id="GO:1901379">
    <property type="term" value="P:regulation of potassium ion transmembrane transport"/>
    <property type="evidence" value="ECO:0000250"/>
    <property type="project" value="UniProtKB"/>
</dbReference>
<dbReference type="CDD" id="cd19159">
    <property type="entry name" value="AKR_KCAB1B_AKR6A3-like"/>
    <property type="match status" value="1"/>
</dbReference>
<dbReference type="FunFam" id="3.20.20.100:FF:000001">
    <property type="entry name" value="voltage-gated potassium channel subunit beta-2 isoform X2"/>
    <property type="match status" value="1"/>
</dbReference>
<dbReference type="Gene3D" id="3.20.20.100">
    <property type="entry name" value="NADP-dependent oxidoreductase domain"/>
    <property type="match status" value="1"/>
</dbReference>
<dbReference type="InterPro" id="IPR005983">
    <property type="entry name" value="K_chnl_volt-dep_bsu_KCNAB"/>
</dbReference>
<dbReference type="InterPro" id="IPR005399">
    <property type="entry name" value="K_chnl_volt-dep_bsu_KCNAB-rel"/>
</dbReference>
<dbReference type="InterPro" id="IPR005400">
    <property type="entry name" value="K_chnl_volt-dep_bsu_KCNAB1"/>
</dbReference>
<dbReference type="InterPro" id="IPR023210">
    <property type="entry name" value="NADP_OxRdtase_dom"/>
</dbReference>
<dbReference type="InterPro" id="IPR036812">
    <property type="entry name" value="NADP_OxRdtase_dom_sf"/>
</dbReference>
<dbReference type="NCBIfam" id="TIGR01293">
    <property type="entry name" value="Kv_beta"/>
    <property type="match status" value="1"/>
</dbReference>
<dbReference type="PANTHER" id="PTHR43150">
    <property type="entry name" value="HYPERKINETIC, ISOFORM M"/>
    <property type="match status" value="1"/>
</dbReference>
<dbReference type="PANTHER" id="PTHR43150:SF7">
    <property type="entry name" value="VOLTAGE-GATED POTASSIUM CHANNEL SUBUNIT BETA-1"/>
    <property type="match status" value="1"/>
</dbReference>
<dbReference type="Pfam" id="PF00248">
    <property type="entry name" value="Aldo_ket_red"/>
    <property type="match status" value="1"/>
</dbReference>
<dbReference type="PRINTS" id="PR01578">
    <property type="entry name" value="KCNAB1CHANEL"/>
</dbReference>
<dbReference type="PRINTS" id="PR01577">
    <property type="entry name" value="KCNABCHANNEL"/>
</dbReference>
<dbReference type="SUPFAM" id="SSF51430">
    <property type="entry name" value="NAD(P)-linked oxidoreductase"/>
    <property type="match status" value="1"/>
</dbReference>